<gene>
    <name evidence="1" type="primary">pgi</name>
    <name type="ordered locus">LEUM_0355</name>
</gene>
<proteinExistence type="inferred from homology"/>
<feature type="chain" id="PRO_1000013984" description="Glucose-6-phosphate isomerase">
    <location>
        <begin position="1"/>
        <end position="450"/>
    </location>
</feature>
<feature type="active site" description="Proton donor" evidence="1">
    <location>
        <position position="290"/>
    </location>
</feature>
<feature type="active site" evidence="1">
    <location>
        <position position="311"/>
    </location>
</feature>
<feature type="active site" evidence="1">
    <location>
        <position position="425"/>
    </location>
</feature>
<sequence>MAHITFDTKNIENFVADHELDEMQPLIKMADEQLRNRSGAGAEYSDWITLPTDYDKDEFARIQTAAQKIQSDSKVLVVIGIGGSYLGAKMAVDFLNPMFNNELADNQRQGVKIYFAGNSTSASYINDLVRVIGDQDFSVNVISKSGTTTEPSIAFRVFKQLLEKKYGAEAAKQRIYATTDANRGALHDEAKISGYETFTIPDGVGGRFSVLTAVGLLPIAASGADIEALMTGARDAQEEYSDSDIKNNEAYKYAAVRRILYDKGYTTELLINWEPTMQYLSEWWKQLMGESEGKNQKGIYPSSANFSTDLHSLGQYIQEGRRDLFETVVKLDNPVSNIDLPHEDGNNDGLQYLEGVTIDEVNTKASQGVTLAHVDGGVPNLAVHLPAQDAYSLGYLIYFFEIAVGASGYTFGINPFNQPGVEAYKTAMFALLGKPGYEEQTKVYRARLGK</sequence>
<comment type="function">
    <text evidence="1">Catalyzes the reversible isomerization of glucose-6-phosphate to fructose-6-phosphate.</text>
</comment>
<comment type="catalytic activity">
    <reaction evidence="1">
        <text>alpha-D-glucose 6-phosphate = beta-D-fructose 6-phosphate</text>
        <dbReference type="Rhea" id="RHEA:11816"/>
        <dbReference type="ChEBI" id="CHEBI:57634"/>
        <dbReference type="ChEBI" id="CHEBI:58225"/>
        <dbReference type="EC" id="5.3.1.9"/>
    </reaction>
</comment>
<comment type="pathway">
    <text evidence="1">Carbohydrate biosynthesis; gluconeogenesis.</text>
</comment>
<comment type="pathway">
    <text evidence="1">Carbohydrate degradation; glycolysis; D-glyceraldehyde 3-phosphate and glycerone phosphate from D-glucose: step 2/4.</text>
</comment>
<comment type="subcellular location">
    <subcellularLocation>
        <location evidence="1">Cytoplasm</location>
    </subcellularLocation>
</comment>
<comment type="similarity">
    <text evidence="1">Belongs to the GPI family.</text>
</comment>
<organism>
    <name type="scientific">Leuconostoc mesenteroides subsp. mesenteroides (strain ATCC 8293 / DSM 20343 / BCRC 11652 / CCM 1803 / JCM 6124 / NCDO 523 / NBRC 100496 / NCIMB 8023 / NCTC 12954 / NRRL B-1118 / 37Y)</name>
    <dbReference type="NCBI Taxonomy" id="203120"/>
    <lineage>
        <taxon>Bacteria</taxon>
        <taxon>Bacillati</taxon>
        <taxon>Bacillota</taxon>
        <taxon>Bacilli</taxon>
        <taxon>Lactobacillales</taxon>
        <taxon>Lactobacillaceae</taxon>
        <taxon>Leuconostoc</taxon>
    </lineage>
</organism>
<reference key="1">
    <citation type="journal article" date="2006" name="Proc. Natl. Acad. Sci. U.S.A.">
        <title>Comparative genomics of the lactic acid bacteria.</title>
        <authorList>
            <person name="Makarova K.S."/>
            <person name="Slesarev A."/>
            <person name="Wolf Y.I."/>
            <person name="Sorokin A."/>
            <person name="Mirkin B."/>
            <person name="Koonin E.V."/>
            <person name="Pavlov A."/>
            <person name="Pavlova N."/>
            <person name="Karamychev V."/>
            <person name="Polouchine N."/>
            <person name="Shakhova V."/>
            <person name="Grigoriev I."/>
            <person name="Lou Y."/>
            <person name="Rohksar D."/>
            <person name="Lucas S."/>
            <person name="Huang K."/>
            <person name="Goodstein D.M."/>
            <person name="Hawkins T."/>
            <person name="Plengvidhya V."/>
            <person name="Welker D."/>
            <person name="Hughes J."/>
            <person name="Goh Y."/>
            <person name="Benson A."/>
            <person name="Baldwin K."/>
            <person name="Lee J.-H."/>
            <person name="Diaz-Muniz I."/>
            <person name="Dosti B."/>
            <person name="Smeianov V."/>
            <person name="Wechter W."/>
            <person name="Barabote R."/>
            <person name="Lorca G."/>
            <person name="Altermann E."/>
            <person name="Barrangou R."/>
            <person name="Ganesan B."/>
            <person name="Xie Y."/>
            <person name="Rawsthorne H."/>
            <person name="Tamir D."/>
            <person name="Parker C."/>
            <person name="Breidt F."/>
            <person name="Broadbent J.R."/>
            <person name="Hutkins R."/>
            <person name="O'Sullivan D."/>
            <person name="Steele J."/>
            <person name="Unlu G."/>
            <person name="Saier M.H. Jr."/>
            <person name="Klaenhammer T."/>
            <person name="Richardson P."/>
            <person name="Kozyavkin S."/>
            <person name="Weimer B.C."/>
            <person name="Mills D.A."/>
        </authorList>
    </citation>
    <scope>NUCLEOTIDE SEQUENCE [LARGE SCALE GENOMIC DNA]</scope>
    <source>
        <strain>ATCC 8293 / DSM 20343 / BCRC 11652 / CCM 1803 / JCM 6124 / NCDO 523 / NBRC 100496 / NCIMB 8023 / NCTC 12954 / NRRL B-1118 / 37Y</strain>
    </source>
</reference>
<accession>Q03Z94</accession>
<protein>
    <recommendedName>
        <fullName evidence="1">Glucose-6-phosphate isomerase</fullName>
        <shortName evidence="1">GPI</shortName>
        <ecNumber evidence="1">5.3.1.9</ecNumber>
    </recommendedName>
    <alternativeName>
        <fullName evidence="1">Phosphoglucose isomerase</fullName>
        <shortName evidence="1">PGI</shortName>
    </alternativeName>
    <alternativeName>
        <fullName evidence="1">Phosphohexose isomerase</fullName>
        <shortName evidence="1">PHI</shortName>
    </alternativeName>
</protein>
<evidence type="ECO:0000255" key="1">
    <source>
        <dbReference type="HAMAP-Rule" id="MF_00473"/>
    </source>
</evidence>
<dbReference type="EC" id="5.3.1.9" evidence="1"/>
<dbReference type="EMBL" id="CP000414">
    <property type="protein sequence ID" value="ABJ61478.1"/>
    <property type="molecule type" value="Genomic_DNA"/>
</dbReference>
<dbReference type="RefSeq" id="WP_011679221.1">
    <property type="nucleotide sequence ID" value="NC_008531.1"/>
</dbReference>
<dbReference type="SMR" id="Q03Z94"/>
<dbReference type="EnsemblBacteria" id="ABJ61478">
    <property type="protein sequence ID" value="ABJ61478"/>
    <property type="gene ID" value="LEUM_0355"/>
</dbReference>
<dbReference type="GeneID" id="29576020"/>
<dbReference type="KEGG" id="lme:LEUM_0355"/>
<dbReference type="eggNOG" id="COG0166">
    <property type="taxonomic scope" value="Bacteria"/>
</dbReference>
<dbReference type="HOGENOM" id="CLU_037303_0_1_9"/>
<dbReference type="UniPathway" id="UPA00109">
    <property type="reaction ID" value="UER00181"/>
</dbReference>
<dbReference type="UniPathway" id="UPA00138"/>
<dbReference type="Proteomes" id="UP000000362">
    <property type="component" value="Chromosome"/>
</dbReference>
<dbReference type="GO" id="GO:0005829">
    <property type="term" value="C:cytosol"/>
    <property type="evidence" value="ECO:0007669"/>
    <property type="project" value="TreeGrafter"/>
</dbReference>
<dbReference type="GO" id="GO:0097367">
    <property type="term" value="F:carbohydrate derivative binding"/>
    <property type="evidence" value="ECO:0007669"/>
    <property type="project" value="InterPro"/>
</dbReference>
<dbReference type="GO" id="GO:0004347">
    <property type="term" value="F:glucose-6-phosphate isomerase activity"/>
    <property type="evidence" value="ECO:0007669"/>
    <property type="project" value="UniProtKB-UniRule"/>
</dbReference>
<dbReference type="GO" id="GO:0048029">
    <property type="term" value="F:monosaccharide binding"/>
    <property type="evidence" value="ECO:0007669"/>
    <property type="project" value="TreeGrafter"/>
</dbReference>
<dbReference type="GO" id="GO:0006094">
    <property type="term" value="P:gluconeogenesis"/>
    <property type="evidence" value="ECO:0007669"/>
    <property type="project" value="UniProtKB-UniRule"/>
</dbReference>
<dbReference type="GO" id="GO:0051156">
    <property type="term" value="P:glucose 6-phosphate metabolic process"/>
    <property type="evidence" value="ECO:0007669"/>
    <property type="project" value="TreeGrafter"/>
</dbReference>
<dbReference type="GO" id="GO:0006096">
    <property type="term" value="P:glycolytic process"/>
    <property type="evidence" value="ECO:0007669"/>
    <property type="project" value="UniProtKB-UniRule"/>
</dbReference>
<dbReference type="CDD" id="cd05015">
    <property type="entry name" value="SIS_PGI_1"/>
    <property type="match status" value="1"/>
</dbReference>
<dbReference type="CDD" id="cd05016">
    <property type="entry name" value="SIS_PGI_2"/>
    <property type="match status" value="1"/>
</dbReference>
<dbReference type="FunFam" id="3.40.50.10490:FF:000015">
    <property type="entry name" value="Glucose-6-phosphate isomerase"/>
    <property type="match status" value="1"/>
</dbReference>
<dbReference type="FunFam" id="3.40.50.10490:FF:000016">
    <property type="entry name" value="Glucose-6-phosphate isomerase"/>
    <property type="match status" value="1"/>
</dbReference>
<dbReference type="Gene3D" id="3.40.50.10490">
    <property type="entry name" value="Glucose-6-phosphate isomerase like protein, domain 1"/>
    <property type="match status" value="3"/>
</dbReference>
<dbReference type="HAMAP" id="MF_00473">
    <property type="entry name" value="G6P_isomerase"/>
    <property type="match status" value="1"/>
</dbReference>
<dbReference type="InterPro" id="IPR001672">
    <property type="entry name" value="G6P_Isomerase"/>
</dbReference>
<dbReference type="InterPro" id="IPR018189">
    <property type="entry name" value="Phosphoglucose_isomerase_CS"/>
</dbReference>
<dbReference type="InterPro" id="IPR046348">
    <property type="entry name" value="SIS_dom_sf"/>
</dbReference>
<dbReference type="InterPro" id="IPR035476">
    <property type="entry name" value="SIS_PGI_1"/>
</dbReference>
<dbReference type="InterPro" id="IPR035482">
    <property type="entry name" value="SIS_PGI_2"/>
</dbReference>
<dbReference type="NCBIfam" id="NF010697">
    <property type="entry name" value="PRK14097.1"/>
    <property type="match status" value="1"/>
</dbReference>
<dbReference type="PANTHER" id="PTHR11469">
    <property type="entry name" value="GLUCOSE-6-PHOSPHATE ISOMERASE"/>
    <property type="match status" value="1"/>
</dbReference>
<dbReference type="PANTHER" id="PTHR11469:SF1">
    <property type="entry name" value="GLUCOSE-6-PHOSPHATE ISOMERASE"/>
    <property type="match status" value="1"/>
</dbReference>
<dbReference type="Pfam" id="PF00342">
    <property type="entry name" value="PGI"/>
    <property type="match status" value="1"/>
</dbReference>
<dbReference type="PRINTS" id="PR00662">
    <property type="entry name" value="G6PISOMERASE"/>
</dbReference>
<dbReference type="SUPFAM" id="SSF53697">
    <property type="entry name" value="SIS domain"/>
    <property type="match status" value="1"/>
</dbReference>
<dbReference type="PROSITE" id="PS00765">
    <property type="entry name" value="P_GLUCOSE_ISOMERASE_1"/>
    <property type="match status" value="1"/>
</dbReference>
<dbReference type="PROSITE" id="PS51463">
    <property type="entry name" value="P_GLUCOSE_ISOMERASE_3"/>
    <property type="match status" value="1"/>
</dbReference>
<name>G6PI_LEUMM</name>
<keyword id="KW-0963">Cytoplasm</keyword>
<keyword id="KW-0312">Gluconeogenesis</keyword>
<keyword id="KW-0324">Glycolysis</keyword>
<keyword id="KW-0413">Isomerase</keyword>
<keyword id="KW-1185">Reference proteome</keyword>